<gene>
    <name type="primary">vip1</name>
    <name type="ORF">SPAC10F6.06</name>
</gene>
<protein>
    <recommendedName>
        <fullName>Protein vip1</fullName>
    </recommendedName>
</protein>
<dbReference type="EMBL" id="Y13635">
    <property type="protein sequence ID" value="CAA73975.1"/>
    <property type="molecule type" value="mRNA"/>
</dbReference>
<dbReference type="EMBL" id="CU329670">
    <property type="protein sequence ID" value="CAA15719.1"/>
    <property type="molecule type" value="Genomic_DNA"/>
</dbReference>
<dbReference type="PIR" id="T37500">
    <property type="entry name" value="T37500"/>
</dbReference>
<dbReference type="RefSeq" id="NP_593257.1">
    <property type="nucleotide sequence ID" value="NM_001018654.2"/>
</dbReference>
<dbReference type="SMR" id="P87216"/>
<dbReference type="BioGRID" id="279447">
    <property type="interactions" value="21"/>
</dbReference>
<dbReference type="FunCoup" id="P87216">
    <property type="interactions" value="107"/>
</dbReference>
<dbReference type="STRING" id="284812.P87216"/>
<dbReference type="iPTMnet" id="P87216"/>
<dbReference type="PaxDb" id="4896-SPAC10F6.06.1"/>
<dbReference type="EnsemblFungi" id="SPAC10F6.06.1">
    <property type="protein sequence ID" value="SPAC10F6.06.1:pep"/>
    <property type="gene ID" value="SPAC10F6.06"/>
</dbReference>
<dbReference type="GeneID" id="2543009"/>
<dbReference type="KEGG" id="spo:2543009"/>
<dbReference type="PomBase" id="SPAC10F6.06">
    <property type="gene designation" value="vip1"/>
</dbReference>
<dbReference type="VEuPathDB" id="FungiDB:SPAC10F6.06"/>
<dbReference type="eggNOG" id="ENOG502S19D">
    <property type="taxonomic scope" value="Eukaryota"/>
</dbReference>
<dbReference type="HOGENOM" id="CLU_074138_0_0_1"/>
<dbReference type="InParanoid" id="P87216"/>
<dbReference type="OMA" id="TQEMKPR"/>
<dbReference type="PhylomeDB" id="P87216"/>
<dbReference type="PRO" id="PR:P87216"/>
<dbReference type="Proteomes" id="UP000002485">
    <property type="component" value="Chromosome I"/>
</dbReference>
<dbReference type="GO" id="GO:0005829">
    <property type="term" value="C:cytosol"/>
    <property type="evidence" value="ECO:0007005"/>
    <property type="project" value="PomBase"/>
</dbReference>
<dbReference type="GO" id="GO:0003723">
    <property type="term" value="F:RNA binding"/>
    <property type="evidence" value="ECO:0000255"/>
    <property type="project" value="PomBase"/>
</dbReference>
<dbReference type="CDD" id="cd12268">
    <property type="entry name" value="RRM_Vip1"/>
    <property type="match status" value="1"/>
</dbReference>
<dbReference type="Gene3D" id="3.30.70.330">
    <property type="match status" value="1"/>
</dbReference>
<dbReference type="InterPro" id="IPR012677">
    <property type="entry name" value="Nucleotide-bd_a/b_plait_sf"/>
</dbReference>
<dbReference type="InterPro" id="IPR035979">
    <property type="entry name" value="RBD_domain_sf"/>
</dbReference>
<dbReference type="InterPro" id="IPR000504">
    <property type="entry name" value="RRM_dom"/>
</dbReference>
<dbReference type="InterPro" id="IPR034358">
    <property type="entry name" value="Vip1_RRM"/>
</dbReference>
<dbReference type="PANTHER" id="PTHR32343:SF10">
    <property type="entry name" value="RNA-BINDING REGION RNP-1 DOMAIN-CONTAINING PROTEIN"/>
    <property type="match status" value="1"/>
</dbReference>
<dbReference type="PANTHER" id="PTHR32343">
    <property type="entry name" value="SERINE/ARGININE-RICH SPLICING FACTOR"/>
    <property type="match status" value="1"/>
</dbReference>
<dbReference type="Pfam" id="PF00076">
    <property type="entry name" value="RRM_1"/>
    <property type="match status" value="1"/>
</dbReference>
<dbReference type="SMART" id="SM00360">
    <property type="entry name" value="RRM"/>
    <property type="match status" value="1"/>
</dbReference>
<dbReference type="SUPFAM" id="SSF54928">
    <property type="entry name" value="RNA-binding domain, RBD"/>
    <property type="match status" value="1"/>
</dbReference>
<dbReference type="PROSITE" id="PS50102">
    <property type="entry name" value="RRM"/>
    <property type="match status" value="1"/>
</dbReference>
<feature type="chain" id="PRO_0000082004" description="Protein vip1">
    <location>
        <begin position="1"/>
        <end position="257"/>
    </location>
</feature>
<feature type="domain" description="RRM" evidence="1">
    <location>
        <begin position="3"/>
        <end position="76"/>
    </location>
</feature>
<feature type="region of interest" description="Disordered" evidence="2">
    <location>
        <begin position="74"/>
        <end position="99"/>
    </location>
</feature>
<feature type="region of interest" description="Disordered" evidence="2">
    <location>
        <begin position="217"/>
        <end position="257"/>
    </location>
</feature>
<feature type="compositionally biased region" description="Low complexity" evidence="2">
    <location>
        <begin position="75"/>
        <end position="84"/>
    </location>
</feature>
<feature type="compositionally biased region" description="Low complexity" evidence="2">
    <location>
        <begin position="230"/>
        <end position="257"/>
    </location>
</feature>
<feature type="modified residue" description="Phosphoserine" evidence="3">
    <location>
        <position position="132"/>
    </location>
</feature>
<feature type="modified residue" description="Phosphoserine" evidence="3">
    <location>
        <position position="177"/>
    </location>
</feature>
<feature type="modified residue" description="Phosphothreonine" evidence="3">
    <location>
        <position position="230"/>
    </location>
</feature>
<feature type="modified residue" description="Phosphoserine" evidence="3">
    <location>
        <position position="232"/>
    </location>
</feature>
<feature type="modified residue" description="Phosphoserine" evidence="3">
    <location>
        <position position="235"/>
    </location>
</feature>
<name>VIPI_SCHPO</name>
<evidence type="ECO:0000255" key="1">
    <source>
        <dbReference type="PROSITE-ProRule" id="PRU00176"/>
    </source>
</evidence>
<evidence type="ECO:0000256" key="2">
    <source>
        <dbReference type="SAM" id="MobiDB-lite"/>
    </source>
</evidence>
<evidence type="ECO:0000269" key="3">
    <source>
    </source>
</evidence>
<reference key="1">
    <citation type="submission" date="1997-06" db="EMBL/GenBank/DDBJ databases">
        <authorList>
            <person name="Jungbluth A."/>
            <person name="Schad M."/>
            <person name="Wagner P."/>
        </authorList>
    </citation>
    <scope>NUCLEOTIDE SEQUENCE [MRNA]</scope>
    <source>
        <strain>972 / ATCC 24843</strain>
    </source>
</reference>
<reference key="2">
    <citation type="journal article" date="2002" name="Nature">
        <title>The genome sequence of Schizosaccharomyces pombe.</title>
        <authorList>
            <person name="Wood V."/>
            <person name="Gwilliam R."/>
            <person name="Rajandream M.A."/>
            <person name="Lyne M.H."/>
            <person name="Lyne R."/>
            <person name="Stewart A."/>
            <person name="Sgouros J.G."/>
            <person name="Peat N."/>
            <person name="Hayles J."/>
            <person name="Baker S.G."/>
            <person name="Basham D."/>
            <person name="Bowman S."/>
            <person name="Brooks K."/>
            <person name="Brown D."/>
            <person name="Brown S."/>
            <person name="Chillingworth T."/>
            <person name="Churcher C.M."/>
            <person name="Collins M."/>
            <person name="Connor R."/>
            <person name="Cronin A."/>
            <person name="Davis P."/>
            <person name="Feltwell T."/>
            <person name="Fraser A."/>
            <person name="Gentles S."/>
            <person name="Goble A."/>
            <person name="Hamlin N."/>
            <person name="Harris D.E."/>
            <person name="Hidalgo J."/>
            <person name="Hodgson G."/>
            <person name="Holroyd S."/>
            <person name="Hornsby T."/>
            <person name="Howarth S."/>
            <person name="Huckle E.J."/>
            <person name="Hunt S."/>
            <person name="Jagels K."/>
            <person name="James K.D."/>
            <person name="Jones L."/>
            <person name="Jones M."/>
            <person name="Leather S."/>
            <person name="McDonald S."/>
            <person name="McLean J."/>
            <person name="Mooney P."/>
            <person name="Moule S."/>
            <person name="Mungall K.L."/>
            <person name="Murphy L.D."/>
            <person name="Niblett D."/>
            <person name="Odell C."/>
            <person name="Oliver K."/>
            <person name="O'Neil S."/>
            <person name="Pearson D."/>
            <person name="Quail M.A."/>
            <person name="Rabbinowitsch E."/>
            <person name="Rutherford K.M."/>
            <person name="Rutter S."/>
            <person name="Saunders D."/>
            <person name="Seeger K."/>
            <person name="Sharp S."/>
            <person name="Skelton J."/>
            <person name="Simmonds M.N."/>
            <person name="Squares R."/>
            <person name="Squares S."/>
            <person name="Stevens K."/>
            <person name="Taylor K."/>
            <person name="Taylor R.G."/>
            <person name="Tivey A."/>
            <person name="Walsh S.V."/>
            <person name="Warren T."/>
            <person name="Whitehead S."/>
            <person name="Woodward J.R."/>
            <person name="Volckaert G."/>
            <person name="Aert R."/>
            <person name="Robben J."/>
            <person name="Grymonprez B."/>
            <person name="Weltjens I."/>
            <person name="Vanstreels E."/>
            <person name="Rieger M."/>
            <person name="Schaefer M."/>
            <person name="Mueller-Auer S."/>
            <person name="Gabel C."/>
            <person name="Fuchs M."/>
            <person name="Duesterhoeft A."/>
            <person name="Fritzc C."/>
            <person name="Holzer E."/>
            <person name="Moestl D."/>
            <person name="Hilbert H."/>
            <person name="Borzym K."/>
            <person name="Langer I."/>
            <person name="Beck A."/>
            <person name="Lehrach H."/>
            <person name="Reinhardt R."/>
            <person name="Pohl T.M."/>
            <person name="Eger P."/>
            <person name="Zimmermann W."/>
            <person name="Wedler H."/>
            <person name="Wambutt R."/>
            <person name="Purnelle B."/>
            <person name="Goffeau A."/>
            <person name="Cadieu E."/>
            <person name="Dreano S."/>
            <person name="Gloux S."/>
            <person name="Lelaure V."/>
            <person name="Mottier S."/>
            <person name="Galibert F."/>
            <person name="Aves S.J."/>
            <person name="Xiang Z."/>
            <person name="Hunt C."/>
            <person name="Moore K."/>
            <person name="Hurst S.M."/>
            <person name="Lucas M."/>
            <person name="Rochet M."/>
            <person name="Gaillardin C."/>
            <person name="Tallada V.A."/>
            <person name="Garzon A."/>
            <person name="Thode G."/>
            <person name="Daga R.R."/>
            <person name="Cruzado L."/>
            <person name="Jimenez J."/>
            <person name="Sanchez M."/>
            <person name="del Rey F."/>
            <person name="Benito J."/>
            <person name="Dominguez A."/>
            <person name="Revuelta J.L."/>
            <person name="Moreno S."/>
            <person name="Armstrong J."/>
            <person name="Forsburg S.L."/>
            <person name="Cerutti L."/>
            <person name="Lowe T."/>
            <person name="McCombie W.R."/>
            <person name="Paulsen I."/>
            <person name="Potashkin J."/>
            <person name="Shpakovski G.V."/>
            <person name="Ussery D."/>
            <person name="Barrell B.G."/>
            <person name="Nurse P."/>
        </authorList>
    </citation>
    <scope>NUCLEOTIDE SEQUENCE [LARGE SCALE GENOMIC DNA]</scope>
    <source>
        <strain>972 / ATCC 24843</strain>
    </source>
</reference>
<reference key="3">
    <citation type="journal article" date="2008" name="J. Proteome Res.">
        <title>Phosphoproteome analysis of fission yeast.</title>
        <authorList>
            <person name="Wilson-Grady J.T."/>
            <person name="Villen J."/>
            <person name="Gygi S.P."/>
        </authorList>
    </citation>
    <scope>PHOSPHORYLATION [LARGE SCALE ANALYSIS] AT SER-132; SER-177; THR-230; SER-232 AND SER-235</scope>
    <scope>IDENTIFICATION BY MASS SPECTROMETRY</scope>
</reference>
<accession>P87216</accession>
<organism>
    <name type="scientific">Schizosaccharomyces pombe (strain 972 / ATCC 24843)</name>
    <name type="common">Fission yeast</name>
    <dbReference type="NCBI Taxonomy" id="284812"/>
    <lineage>
        <taxon>Eukaryota</taxon>
        <taxon>Fungi</taxon>
        <taxon>Dikarya</taxon>
        <taxon>Ascomycota</taxon>
        <taxon>Taphrinomycotina</taxon>
        <taxon>Schizosaccharomycetes</taxon>
        <taxon>Schizosaccharomycetales</taxon>
        <taxon>Schizosaccharomycetaceae</taxon>
        <taxon>Schizosaccharomyces</taxon>
    </lineage>
</organism>
<sequence length="257" mass="27459">MSNQVIVTNISPEVTEKQISDFFSFCGKVSNISTEKSGETQTAKIQFERPSATKTALLLQDALLGQNKIQITSEDGGAASTTDQGGAGGDQAARQEDKPRSAIISELLSRGYHLSDVTLEKSIQLDQSYGVSSKFKGILESALSGVRSVNERYHVTEKANEVDNKFAISDKLNRTSSLVSTYFHKALETAAGTSAGQKVQNAYEDGKNQLLGIHNEARRLADAKNQAEGTASPASSTPTAPAEKEPTAPTTESKTTE</sequence>
<proteinExistence type="evidence at protein level"/>
<keyword id="KW-0597">Phosphoprotein</keyword>
<keyword id="KW-1185">Reference proteome</keyword>
<keyword id="KW-0694">RNA-binding</keyword>